<evidence type="ECO:0000255" key="1">
    <source>
        <dbReference type="HAMAP-Rule" id="MF_00102"/>
    </source>
</evidence>
<evidence type="ECO:0000305" key="2"/>
<reference key="1">
    <citation type="thesis" date="1999" institute="University of Oxford" country="United Kingdom">
        <title>Development and application of a dapB-based IVET selection strategy to identify Pseudomonas fluorescens genes expressed in the plant rhizosphere.</title>
        <authorList>
            <person name="Gal M."/>
        </authorList>
    </citation>
    <scope>NUCLEOTIDE SEQUENCE [GENOMIC DNA]</scope>
</reference>
<reference key="2">
    <citation type="journal article" date="2009" name="Genome Biol.">
        <title>Genomic and genetic analyses of diversity and plant interactions of Pseudomonas fluorescens.</title>
        <authorList>
            <person name="Silby M.W."/>
            <person name="Cerdeno-Tarraga A.M."/>
            <person name="Vernikos G.S."/>
            <person name="Giddens S.R."/>
            <person name="Jackson R.W."/>
            <person name="Preston G.M."/>
            <person name="Zhang X.-X."/>
            <person name="Moon C.D."/>
            <person name="Gehrig S.M."/>
            <person name="Godfrey S.A.C."/>
            <person name="Knight C.G."/>
            <person name="Malone J.G."/>
            <person name="Robinson Z."/>
            <person name="Spiers A.J."/>
            <person name="Harris S."/>
            <person name="Challis G.L."/>
            <person name="Yaxley A.M."/>
            <person name="Harris D."/>
            <person name="Seeger K."/>
            <person name="Murphy L."/>
            <person name="Rutter S."/>
            <person name="Squares R."/>
            <person name="Quail M.A."/>
            <person name="Saunders E."/>
            <person name="Mavromatis K."/>
            <person name="Brettin T.S."/>
            <person name="Bentley S.D."/>
            <person name="Hothersall J."/>
            <person name="Stephens E."/>
            <person name="Thomas C.M."/>
            <person name="Parkhill J."/>
            <person name="Levy S.B."/>
            <person name="Rainey P.B."/>
            <person name="Thomson N.R."/>
        </authorList>
    </citation>
    <scope>NUCLEOTIDE SEQUENCE [LARGE SCALE GENOMIC DNA]</scope>
    <source>
        <strain>SBW25</strain>
    </source>
</reference>
<name>DAPB_PSEFS</name>
<accession>Q84CP9</accession>
<accession>C3K273</accession>
<protein>
    <recommendedName>
        <fullName evidence="1">4-hydroxy-tetrahydrodipicolinate reductase</fullName>
        <shortName evidence="1">HTPA reductase</shortName>
        <ecNumber evidence="1">1.17.1.8</ecNumber>
    </recommendedName>
</protein>
<keyword id="KW-0028">Amino-acid biosynthesis</keyword>
<keyword id="KW-0963">Cytoplasm</keyword>
<keyword id="KW-0220">Diaminopimelate biosynthesis</keyword>
<keyword id="KW-0457">Lysine biosynthesis</keyword>
<keyword id="KW-0520">NAD</keyword>
<keyword id="KW-0521">NADP</keyword>
<keyword id="KW-0560">Oxidoreductase</keyword>
<proteinExistence type="inferred from homology"/>
<sequence length="268" mass="28294">MRRIAVMGAAGRMGKTLVEAVQQRSPASGLTAAIVRPGSTLIGADAGELASLGRIGVSLSGNLEQVADEFDVLIDFTLPDVMLKNLAFCRKAGKAMVIGTTGLTLEQKQLLAEAGKDIPIVFAANFSVGVNLSLKLLDLAARVLGDEADIEIIETHHRHKIDAPSGTALRMGEAIADALGRDLSKVAVYGREGHTGARARDTIGFATVRGGDVVGDHTVLFASEGERLEITHKASSRMTFAKGAVRAALWLEGRAAGLYDMRDVLDLH</sequence>
<organism>
    <name type="scientific">Pseudomonas fluorescens (strain SBW25)</name>
    <dbReference type="NCBI Taxonomy" id="216595"/>
    <lineage>
        <taxon>Bacteria</taxon>
        <taxon>Pseudomonadati</taxon>
        <taxon>Pseudomonadota</taxon>
        <taxon>Gammaproteobacteria</taxon>
        <taxon>Pseudomonadales</taxon>
        <taxon>Pseudomonadaceae</taxon>
        <taxon>Pseudomonas</taxon>
    </lineage>
</organism>
<gene>
    <name evidence="1" type="primary">dapB</name>
    <name type="ordered locus">PFLU_5267</name>
</gene>
<comment type="function">
    <text evidence="1">Catalyzes the conversion of 4-hydroxy-tetrahydrodipicolinate (HTPA) to tetrahydrodipicolinate.</text>
</comment>
<comment type="catalytic activity">
    <reaction evidence="1">
        <text>(S)-2,3,4,5-tetrahydrodipicolinate + NAD(+) + H2O = (2S,4S)-4-hydroxy-2,3,4,5-tetrahydrodipicolinate + NADH + H(+)</text>
        <dbReference type="Rhea" id="RHEA:35323"/>
        <dbReference type="ChEBI" id="CHEBI:15377"/>
        <dbReference type="ChEBI" id="CHEBI:15378"/>
        <dbReference type="ChEBI" id="CHEBI:16845"/>
        <dbReference type="ChEBI" id="CHEBI:57540"/>
        <dbReference type="ChEBI" id="CHEBI:57945"/>
        <dbReference type="ChEBI" id="CHEBI:67139"/>
        <dbReference type="EC" id="1.17.1.8"/>
    </reaction>
</comment>
<comment type="catalytic activity">
    <reaction evidence="1">
        <text>(S)-2,3,4,5-tetrahydrodipicolinate + NADP(+) + H2O = (2S,4S)-4-hydroxy-2,3,4,5-tetrahydrodipicolinate + NADPH + H(+)</text>
        <dbReference type="Rhea" id="RHEA:35331"/>
        <dbReference type="ChEBI" id="CHEBI:15377"/>
        <dbReference type="ChEBI" id="CHEBI:15378"/>
        <dbReference type="ChEBI" id="CHEBI:16845"/>
        <dbReference type="ChEBI" id="CHEBI:57783"/>
        <dbReference type="ChEBI" id="CHEBI:58349"/>
        <dbReference type="ChEBI" id="CHEBI:67139"/>
        <dbReference type="EC" id="1.17.1.8"/>
    </reaction>
</comment>
<comment type="pathway">
    <text evidence="1">Amino-acid biosynthesis; L-lysine biosynthesis via DAP pathway; (S)-tetrahydrodipicolinate from L-aspartate: step 4/4.</text>
</comment>
<comment type="subcellular location">
    <subcellularLocation>
        <location evidence="1">Cytoplasm</location>
    </subcellularLocation>
</comment>
<comment type="similarity">
    <text evidence="1">Belongs to the DapB family.</text>
</comment>
<comment type="caution">
    <text evidence="2">Was originally thought to be a dihydrodipicolinate reductase (DHDPR), catalyzing the conversion of dihydrodipicolinate to tetrahydrodipicolinate. However, it was shown in E.coli that the substrate of the enzymatic reaction is not dihydrodipicolinate (DHDP) but in fact (2S,4S)-4-hydroxy-2,3,4,5-tetrahydrodipicolinic acid (HTPA), the product released by the DapA-catalyzed reaction.</text>
</comment>
<dbReference type="EC" id="1.17.1.8" evidence="1"/>
<dbReference type="EMBL" id="AJ555448">
    <property type="protein sequence ID" value="CAD88191.1"/>
    <property type="molecule type" value="Genomic_DNA"/>
</dbReference>
<dbReference type="EMBL" id="AM181176">
    <property type="protein sequence ID" value="CAY52371.1"/>
    <property type="molecule type" value="Genomic_DNA"/>
</dbReference>
<dbReference type="RefSeq" id="WP_015885929.1">
    <property type="nucleotide sequence ID" value="NC_012660.1"/>
</dbReference>
<dbReference type="SMR" id="Q84CP9"/>
<dbReference type="STRING" id="294.SRM1_00811"/>
<dbReference type="PATRIC" id="fig|216595.4.peg.5399"/>
<dbReference type="eggNOG" id="COG0289">
    <property type="taxonomic scope" value="Bacteria"/>
</dbReference>
<dbReference type="HOGENOM" id="CLU_047479_2_1_6"/>
<dbReference type="OrthoDB" id="9790352at2"/>
<dbReference type="UniPathway" id="UPA00034">
    <property type="reaction ID" value="UER00018"/>
</dbReference>
<dbReference type="GO" id="GO:0005829">
    <property type="term" value="C:cytosol"/>
    <property type="evidence" value="ECO:0007669"/>
    <property type="project" value="TreeGrafter"/>
</dbReference>
<dbReference type="GO" id="GO:0008839">
    <property type="term" value="F:4-hydroxy-tetrahydrodipicolinate reductase"/>
    <property type="evidence" value="ECO:0007669"/>
    <property type="project" value="UniProtKB-EC"/>
</dbReference>
<dbReference type="GO" id="GO:0051287">
    <property type="term" value="F:NAD binding"/>
    <property type="evidence" value="ECO:0007669"/>
    <property type="project" value="UniProtKB-UniRule"/>
</dbReference>
<dbReference type="GO" id="GO:0050661">
    <property type="term" value="F:NADP binding"/>
    <property type="evidence" value="ECO:0007669"/>
    <property type="project" value="UniProtKB-UniRule"/>
</dbReference>
<dbReference type="GO" id="GO:0016726">
    <property type="term" value="F:oxidoreductase activity, acting on CH or CH2 groups, NAD or NADP as acceptor"/>
    <property type="evidence" value="ECO:0007669"/>
    <property type="project" value="UniProtKB-UniRule"/>
</dbReference>
<dbReference type="GO" id="GO:0019877">
    <property type="term" value="P:diaminopimelate biosynthetic process"/>
    <property type="evidence" value="ECO:0007669"/>
    <property type="project" value="UniProtKB-UniRule"/>
</dbReference>
<dbReference type="GO" id="GO:0009089">
    <property type="term" value="P:lysine biosynthetic process via diaminopimelate"/>
    <property type="evidence" value="ECO:0007669"/>
    <property type="project" value="UniProtKB-UniRule"/>
</dbReference>
<dbReference type="CDD" id="cd02274">
    <property type="entry name" value="DHDPR_N"/>
    <property type="match status" value="1"/>
</dbReference>
<dbReference type="FunFam" id="3.30.360.10:FF:000004">
    <property type="entry name" value="4-hydroxy-tetrahydrodipicolinate reductase"/>
    <property type="match status" value="1"/>
</dbReference>
<dbReference type="FunFam" id="3.40.50.720:FF:000048">
    <property type="entry name" value="4-hydroxy-tetrahydrodipicolinate reductase"/>
    <property type="match status" value="1"/>
</dbReference>
<dbReference type="Gene3D" id="3.30.360.10">
    <property type="entry name" value="Dihydrodipicolinate Reductase, domain 2"/>
    <property type="match status" value="1"/>
</dbReference>
<dbReference type="Gene3D" id="3.40.50.720">
    <property type="entry name" value="NAD(P)-binding Rossmann-like Domain"/>
    <property type="match status" value="1"/>
</dbReference>
<dbReference type="HAMAP" id="MF_00102">
    <property type="entry name" value="DapB"/>
    <property type="match status" value="1"/>
</dbReference>
<dbReference type="InterPro" id="IPR022663">
    <property type="entry name" value="DapB_C"/>
</dbReference>
<dbReference type="InterPro" id="IPR000846">
    <property type="entry name" value="DapB_N"/>
</dbReference>
<dbReference type="InterPro" id="IPR022664">
    <property type="entry name" value="DapB_N_CS"/>
</dbReference>
<dbReference type="InterPro" id="IPR023940">
    <property type="entry name" value="DHDPR_bac"/>
</dbReference>
<dbReference type="InterPro" id="IPR036291">
    <property type="entry name" value="NAD(P)-bd_dom_sf"/>
</dbReference>
<dbReference type="NCBIfam" id="TIGR00036">
    <property type="entry name" value="dapB"/>
    <property type="match status" value="1"/>
</dbReference>
<dbReference type="PANTHER" id="PTHR20836:SF0">
    <property type="entry name" value="4-HYDROXY-TETRAHYDRODIPICOLINATE REDUCTASE 1, CHLOROPLASTIC-RELATED"/>
    <property type="match status" value="1"/>
</dbReference>
<dbReference type="PANTHER" id="PTHR20836">
    <property type="entry name" value="DIHYDRODIPICOLINATE REDUCTASE"/>
    <property type="match status" value="1"/>
</dbReference>
<dbReference type="Pfam" id="PF05173">
    <property type="entry name" value="DapB_C"/>
    <property type="match status" value="1"/>
</dbReference>
<dbReference type="Pfam" id="PF01113">
    <property type="entry name" value="DapB_N"/>
    <property type="match status" value="1"/>
</dbReference>
<dbReference type="PIRSF" id="PIRSF000161">
    <property type="entry name" value="DHPR"/>
    <property type="match status" value="1"/>
</dbReference>
<dbReference type="SUPFAM" id="SSF55347">
    <property type="entry name" value="Glyceraldehyde-3-phosphate dehydrogenase-like, C-terminal domain"/>
    <property type="match status" value="1"/>
</dbReference>
<dbReference type="SUPFAM" id="SSF51735">
    <property type="entry name" value="NAD(P)-binding Rossmann-fold domains"/>
    <property type="match status" value="1"/>
</dbReference>
<dbReference type="PROSITE" id="PS01298">
    <property type="entry name" value="DAPB"/>
    <property type="match status" value="1"/>
</dbReference>
<feature type="chain" id="PRO_0000141469" description="4-hydroxy-tetrahydrodipicolinate reductase">
    <location>
        <begin position="1"/>
        <end position="268"/>
    </location>
</feature>
<feature type="active site" description="Proton donor/acceptor" evidence="1">
    <location>
        <position position="156"/>
    </location>
</feature>
<feature type="active site" description="Proton donor" evidence="1">
    <location>
        <position position="160"/>
    </location>
</feature>
<feature type="binding site" evidence="1">
    <location>
        <begin position="8"/>
        <end position="13"/>
    </location>
    <ligand>
        <name>NAD(+)</name>
        <dbReference type="ChEBI" id="CHEBI:57540"/>
    </ligand>
</feature>
<feature type="binding site" evidence="1">
    <location>
        <position position="36"/>
    </location>
    <ligand>
        <name>NADP(+)</name>
        <dbReference type="ChEBI" id="CHEBI:58349"/>
    </ligand>
</feature>
<feature type="binding site" evidence="1">
    <location>
        <begin position="99"/>
        <end position="101"/>
    </location>
    <ligand>
        <name>NAD(+)</name>
        <dbReference type="ChEBI" id="CHEBI:57540"/>
    </ligand>
</feature>
<feature type="binding site" evidence="1">
    <location>
        <begin position="123"/>
        <end position="126"/>
    </location>
    <ligand>
        <name>NAD(+)</name>
        <dbReference type="ChEBI" id="CHEBI:57540"/>
    </ligand>
</feature>
<feature type="binding site" evidence="1">
    <location>
        <position position="157"/>
    </location>
    <ligand>
        <name>(S)-2,3,4,5-tetrahydrodipicolinate</name>
        <dbReference type="ChEBI" id="CHEBI:16845"/>
    </ligand>
</feature>
<feature type="binding site" evidence="1">
    <location>
        <begin position="166"/>
        <end position="167"/>
    </location>
    <ligand>
        <name>(S)-2,3,4,5-tetrahydrodipicolinate</name>
        <dbReference type="ChEBI" id="CHEBI:16845"/>
    </ligand>
</feature>
<feature type="sequence conflict" description="In Ref. 1; CAD88191." evidence="2" ref="1">
    <original>KA</original>
    <variation>N</variation>
    <location>
        <begin position="91"/>
        <end position="92"/>
    </location>
</feature>
<feature type="sequence conflict" description="In Ref. 1; CAD88191." evidence="2" ref="1">
    <original>L</original>
    <variation>R</variation>
    <location>
        <position position="144"/>
    </location>
</feature>